<comment type="similarity">
    <text evidence="1">Belongs to the UPF0371 family.</text>
</comment>
<proteinExistence type="inferred from homology"/>
<dbReference type="EMBL" id="AM942444">
    <property type="protein sequence ID" value="CAQ04498.1"/>
    <property type="molecule type" value="Genomic_DNA"/>
</dbReference>
<dbReference type="RefSeq" id="WP_012359790.1">
    <property type="nucleotide sequence ID" value="NC_010545.1"/>
</dbReference>
<dbReference type="SMR" id="B1VFF9"/>
<dbReference type="STRING" id="504474.cu0538"/>
<dbReference type="GeneID" id="60605338"/>
<dbReference type="KEGG" id="cur:cu0538"/>
<dbReference type="eggNOG" id="COG4868">
    <property type="taxonomic scope" value="Bacteria"/>
</dbReference>
<dbReference type="HOGENOM" id="CLU_046981_0_0_11"/>
<dbReference type="Proteomes" id="UP000001727">
    <property type="component" value="Chromosome"/>
</dbReference>
<dbReference type="Gene3D" id="1.20.1570.10">
    <property type="entry name" value="dip2346 domain like"/>
    <property type="match status" value="1"/>
</dbReference>
<dbReference type="Gene3D" id="3.10.630.10">
    <property type="entry name" value="dip2346 domain like"/>
    <property type="match status" value="1"/>
</dbReference>
<dbReference type="Gene3D" id="3.40.140.40">
    <property type="entry name" value="Domain of unknown function (DUF1846), C-terminal subdomain"/>
    <property type="match status" value="1"/>
</dbReference>
<dbReference type="HAMAP" id="MF_01567">
    <property type="entry name" value="UPF0371"/>
    <property type="match status" value="1"/>
</dbReference>
<dbReference type="InterPro" id="IPR014999">
    <property type="entry name" value="DUF1846"/>
</dbReference>
<dbReference type="InterPro" id="IPR048441">
    <property type="entry name" value="DUF1846_C"/>
</dbReference>
<dbReference type="InterPro" id="IPR048496">
    <property type="entry name" value="DUF1846_N"/>
</dbReference>
<dbReference type="NCBIfam" id="NF010184">
    <property type="entry name" value="PRK13663.1"/>
    <property type="match status" value="1"/>
</dbReference>
<dbReference type="Pfam" id="PF08903">
    <property type="entry name" value="DUF1846"/>
    <property type="match status" value="1"/>
</dbReference>
<dbReference type="Pfam" id="PF20921">
    <property type="entry name" value="DUF1846_C"/>
    <property type="match status" value="1"/>
</dbReference>
<dbReference type="PIRSF" id="PIRSF033132">
    <property type="entry name" value="DUF1846"/>
    <property type="match status" value="1"/>
</dbReference>
<feature type="chain" id="PRO_1000199743" description="UPF0371 protein cu0538">
    <location>
        <begin position="1"/>
        <end position="497"/>
    </location>
</feature>
<name>Y538_CORU7</name>
<reference key="1">
    <citation type="journal article" date="2008" name="J. Biotechnol.">
        <title>The lifestyle of Corynebacterium urealyticum derived from its complete genome sequence established by pyrosequencing.</title>
        <authorList>
            <person name="Tauch A."/>
            <person name="Trost E."/>
            <person name="Tilker A."/>
            <person name="Ludewig U."/>
            <person name="Schneiker S."/>
            <person name="Goesmann A."/>
            <person name="Arnold W."/>
            <person name="Bekel T."/>
            <person name="Brinkrolf K."/>
            <person name="Brune I."/>
            <person name="Goetker S."/>
            <person name="Kalinowski J."/>
            <person name="Kamp P.-B."/>
            <person name="Lobo F.P."/>
            <person name="Viehoever P."/>
            <person name="Weisshaar B."/>
            <person name="Soriano F."/>
            <person name="Droege M."/>
            <person name="Puehler A."/>
        </authorList>
    </citation>
    <scope>NUCLEOTIDE SEQUENCE [LARGE SCALE GENOMIC DNA]</scope>
    <source>
        <strain>ATCC 43042 / DSM 7109</strain>
    </source>
</reference>
<sequence>MTHGIGFDRDKYIQLQSEHINERREQIGGKLYLEMGGKLFDDYHASRVLPGFTPDNKIAMLENIKEDVEIVVCLNARDLERGKVRADLSIPYEEDALRLVDVFRDRGFRVNNVVLTQLEDSNHMAVAFAERLERLGLNVARHRVIPGYPTNTELVVSDGGFGLNDYVETSRDLVVVTAPGPGSGKLATCLSQVYHEFRRGVPAGYAKFETFPIWNLPLEHPVNLAYEAATADLDDINVIDPFHLQAYGKQVTSYNRDVEVFPLLKTLLEKLYGHSPYQSPTDMGVNMVGHCISDDELCREAAKQEIVRRYYKALVDERREDTDDTVSSRVAIVMSKVGASTKDRRVVAAANEVEERTGEPGSALELADGTIITGKTSELLGCSAAMLLNALKHLAGLDDDIHLLSPKSIEPIQTLKVDHLGSQNPRLHTDEVLIALSVSAAESEDARAALKQLKNLAGCDVHTTTILGSVDEGIFRNLGVLVTSEPKYWRKALYRKR</sequence>
<protein>
    <recommendedName>
        <fullName evidence="1">UPF0371 protein cu0538</fullName>
    </recommendedName>
</protein>
<gene>
    <name type="ordered locus">cu0538</name>
</gene>
<evidence type="ECO:0000255" key="1">
    <source>
        <dbReference type="HAMAP-Rule" id="MF_01567"/>
    </source>
</evidence>
<keyword id="KW-1185">Reference proteome</keyword>
<organism>
    <name type="scientific">Corynebacterium urealyticum (strain ATCC 43042 / DSM 7109)</name>
    <dbReference type="NCBI Taxonomy" id="504474"/>
    <lineage>
        <taxon>Bacteria</taxon>
        <taxon>Bacillati</taxon>
        <taxon>Actinomycetota</taxon>
        <taxon>Actinomycetes</taxon>
        <taxon>Mycobacteriales</taxon>
        <taxon>Corynebacteriaceae</taxon>
        <taxon>Corynebacterium</taxon>
    </lineage>
</organism>
<accession>B1VFF9</accession>